<name>MGSA_OLEA2</name>
<comment type="function">
    <text evidence="1">Catalyzes the formation of methylglyoxal from dihydroxyacetone phosphate.</text>
</comment>
<comment type="catalytic activity">
    <reaction evidence="1">
        <text>dihydroxyacetone phosphate = methylglyoxal + phosphate</text>
        <dbReference type="Rhea" id="RHEA:17937"/>
        <dbReference type="ChEBI" id="CHEBI:17158"/>
        <dbReference type="ChEBI" id="CHEBI:43474"/>
        <dbReference type="ChEBI" id="CHEBI:57642"/>
        <dbReference type="EC" id="4.2.3.3"/>
    </reaction>
</comment>
<comment type="similarity">
    <text evidence="1">Belongs to the methylglyoxal synthase family.</text>
</comment>
<dbReference type="EC" id="4.2.3.3" evidence="1"/>
<dbReference type="EMBL" id="CP000112">
    <property type="protein sequence ID" value="ABB38776.1"/>
    <property type="molecule type" value="Genomic_DNA"/>
</dbReference>
<dbReference type="RefSeq" id="WP_011367886.1">
    <property type="nucleotide sequence ID" value="NC_007519.1"/>
</dbReference>
<dbReference type="SMR" id="Q30ZX0"/>
<dbReference type="STRING" id="207559.Dde_1979"/>
<dbReference type="KEGG" id="dde:Dde_1979"/>
<dbReference type="eggNOG" id="COG1803">
    <property type="taxonomic scope" value="Bacteria"/>
</dbReference>
<dbReference type="HOGENOM" id="CLU_120420_1_0_7"/>
<dbReference type="Proteomes" id="UP000002710">
    <property type="component" value="Chromosome"/>
</dbReference>
<dbReference type="GO" id="GO:0005829">
    <property type="term" value="C:cytosol"/>
    <property type="evidence" value="ECO:0007669"/>
    <property type="project" value="TreeGrafter"/>
</dbReference>
<dbReference type="GO" id="GO:0008929">
    <property type="term" value="F:methylglyoxal synthase activity"/>
    <property type="evidence" value="ECO:0007669"/>
    <property type="project" value="UniProtKB-UniRule"/>
</dbReference>
<dbReference type="GO" id="GO:0019242">
    <property type="term" value="P:methylglyoxal biosynthetic process"/>
    <property type="evidence" value="ECO:0007669"/>
    <property type="project" value="UniProtKB-UniRule"/>
</dbReference>
<dbReference type="CDD" id="cd01422">
    <property type="entry name" value="MGS"/>
    <property type="match status" value="1"/>
</dbReference>
<dbReference type="Gene3D" id="3.40.50.1380">
    <property type="entry name" value="Methylglyoxal synthase-like domain"/>
    <property type="match status" value="1"/>
</dbReference>
<dbReference type="HAMAP" id="MF_00549">
    <property type="entry name" value="Methylglyoxal_synth"/>
    <property type="match status" value="1"/>
</dbReference>
<dbReference type="InterPro" id="IPR004363">
    <property type="entry name" value="Methylgl_synth"/>
</dbReference>
<dbReference type="InterPro" id="IPR018148">
    <property type="entry name" value="Methylglyoxal_synth_AS"/>
</dbReference>
<dbReference type="InterPro" id="IPR011607">
    <property type="entry name" value="MGS-like_dom"/>
</dbReference>
<dbReference type="InterPro" id="IPR036914">
    <property type="entry name" value="MGS-like_dom_sf"/>
</dbReference>
<dbReference type="NCBIfam" id="TIGR00160">
    <property type="entry name" value="MGSA"/>
    <property type="match status" value="1"/>
</dbReference>
<dbReference type="NCBIfam" id="NF003559">
    <property type="entry name" value="PRK05234.1"/>
    <property type="match status" value="1"/>
</dbReference>
<dbReference type="PANTHER" id="PTHR30492">
    <property type="entry name" value="METHYLGLYOXAL SYNTHASE"/>
    <property type="match status" value="1"/>
</dbReference>
<dbReference type="PANTHER" id="PTHR30492:SF0">
    <property type="entry name" value="METHYLGLYOXAL SYNTHASE"/>
    <property type="match status" value="1"/>
</dbReference>
<dbReference type="Pfam" id="PF02142">
    <property type="entry name" value="MGS"/>
    <property type="match status" value="1"/>
</dbReference>
<dbReference type="PIRSF" id="PIRSF006614">
    <property type="entry name" value="Methylglyox_syn"/>
    <property type="match status" value="1"/>
</dbReference>
<dbReference type="SMART" id="SM00851">
    <property type="entry name" value="MGS"/>
    <property type="match status" value="1"/>
</dbReference>
<dbReference type="SUPFAM" id="SSF52335">
    <property type="entry name" value="Methylglyoxal synthase-like"/>
    <property type="match status" value="1"/>
</dbReference>
<dbReference type="PROSITE" id="PS01335">
    <property type="entry name" value="METHYLGLYOXAL_SYNTH"/>
    <property type="match status" value="1"/>
</dbReference>
<dbReference type="PROSITE" id="PS51855">
    <property type="entry name" value="MGS"/>
    <property type="match status" value="1"/>
</dbReference>
<gene>
    <name evidence="1" type="primary">mgsA</name>
    <name type="ordered locus">Dde_1979</name>
</gene>
<reference key="1">
    <citation type="journal article" date="2011" name="J. Bacteriol.">
        <title>Complete genome sequence and updated annotation of Desulfovibrio alaskensis G20.</title>
        <authorList>
            <person name="Hauser L.J."/>
            <person name="Land M.L."/>
            <person name="Brown S.D."/>
            <person name="Larimer F."/>
            <person name="Keller K.L."/>
            <person name="Rapp-Giles B.J."/>
            <person name="Price M.N."/>
            <person name="Lin M."/>
            <person name="Bruce D.C."/>
            <person name="Detter J.C."/>
            <person name="Tapia R."/>
            <person name="Han C.S."/>
            <person name="Goodwin L.A."/>
            <person name="Cheng J.F."/>
            <person name="Pitluck S."/>
            <person name="Copeland A."/>
            <person name="Lucas S."/>
            <person name="Nolan M."/>
            <person name="Lapidus A.L."/>
            <person name="Palumbo A.V."/>
            <person name="Wall J.D."/>
        </authorList>
    </citation>
    <scope>NUCLEOTIDE SEQUENCE [LARGE SCALE GENOMIC DNA]</scope>
    <source>
        <strain>ATCC BAA-1058 / DSM 17464 / G20</strain>
    </source>
</reference>
<proteinExistence type="inferred from homology"/>
<keyword id="KW-0456">Lyase</keyword>
<keyword id="KW-1185">Reference proteome</keyword>
<accession>Q30ZX0</accession>
<evidence type="ECO:0000255" key="1">
    <source>
        <dbReference type="HAMAP-Rule" id="MF_00549"/>
    </source>
</evidence>
<protein>
    <recommendedName>
        <fullName evidence="1">Methylglyoxal synthase</fullName>
        <shortName evidence="1">MGS</shortName>
        <ecNumber evidence="1">4.2.3.3</ecNumber>
    </recommendedName>
</protein>
<sequence>MKGQRNIGMVAHDERKEDLLDWVQHNLQALIPHRIFATGTTGGLLRQRFGDLTITPMKSGPLGGDQQLGSMIAEGRLDMLFFLIDPMAPHPHDVDIKALLRLAVLYNIPAAYNRSTADFLITSPFMTGEYIPEIKDYTPYVKRLGAK</sequence>
<feature type="chain" id="PRO_1000017807" description="Methylglyoxal synthase">
    <location>
        <begin position="1"/>
        <end position="147"/>
    </location>
</feature>
<feature type="domain" description="MGS-like" evidence="1">
    <location>
        <begin position="1"/>
        <end position="147"/>
    </location>
</feature>
<feature type="active site" description="Proton donor/acceptor" evidence="1">
    <location>
        <position position="65"/>
    </location>
</feature>
<feature type="binding site" evidence="1">
    <location>
        <position position="12"/>
    </location>
    <ligand>
        <name>substrate</name>
    </ligand>
</feature>
<feature type="binding site" evidence="1">
    <location>
        <position position="16"/>
    </location>
    <ligand>
        <name>substrate</name>
    </ligand>
</feature>
<feature type="binding site" evidence="1">
    <location>
        <begin position="38"/>
        <end position="41"/>
    </location>
    <ligand>
        <name>substrate</name>
    </ligand>
</feature>
<feature type="binding site" evidence="1">
    <location>
        <begin position="59"/>
        <end position="60"/>
    </location>
    <ligand>
        <name>substrate</name>
    </ligand>
</feature>
<feature type="binding site" evidence="1">
    <location>
        <position position="92"/>
    </location>
    <ligand>
        <name>substrate</name>
    </ligand>
</feature>
<organism>
    <name type="scientific">Oleidesulfovibrio alaskensis (strain ATCC BAA-1058 / DSM 17464 / G20)</name>
    <name type="common">Desulfovibrio alaskensis</name>
    <dbReference type="NCBI Taxonomy" id="207559"/>
    <lineage>
        <taxon>Bacteria</taxon>
        <taxon>Pseudomonadati</taxon>
        <taxon>Thermodesulfobacteriota</taxon>
        <taxon>Desulfovibrionia</taxon>
        <taxon>Desulfovibrionales</taxon>
        <taxon>Desulfovibrionaceae</taxon>
        <taxon>Oleidesulfovibrio</taxon>
    </lineage>
</organism>